<comment type="similarity">
    <text evidence="1">Belongs to the UPF0235 family.</text>
</comment>
<keyword id="KW-1185">Reference proteome</keyword>
<proteinExistence type="inferred from homology"/>
<dbReference type="EMBL" id="CP000142">
    <property type="protein sequence ID" value="ABA87876.1"/>
    <property type="molecule type" value="Genomic_DNA"/>
</dbReference>
<dbReference type="RefSeq" id="WP_011340317.1">
    <property type="nucleotide sequence ID" value="NC_007498.2"/>
</dbReference>
<dbReference type="SMR" id="Q3A6Y1"/>
<dbReference type="STRING" id="338963.Pcar_0617"/>
<dbReference type="KEGG" id="pca:Pcar_0617"/>
<dbReference type="eggNOG" id="COG1872">
    <property type="taxonomic scope" value="Bacteria"/>
</dbReference>
<dbReference type="HOGENOM" id="CLU_130694_6_0_7"/>
<dbReference type="OrthoDB" id="9800587at2"/>
<dbReference type="Proteomes" id="UP000002534">
    <property type="component" value="Chromosome"/>
</dbReference>
<dbReference type="GO" id="GO:0005737">
    <property type="term" value="C:cytoplasm"/>
    <property type="evidence" value="ECO:0007669"/>
    <property type="project" value="TreeGrafter"/>
</dbReference>
<dbReference type="Gene3D" id="3.30.1200.10">
    <property type="entry name" value="YggU-like"/>
    <property type="match status" value="1"/>
</dbReference>
<dbReference type="HAMAP" id="MF_00634">
    <property type="entry name" value="UPF0235"/>
    <property type="match status" value="1"/>
</dbReference>
<dbReference type="InterPro" id="IPR003746">
    <property type="entry name" value="DUF167"/>
</dbReference>
<dbReference type="InterPro" id="IPR036591">
    <property type="entry name" value="YggU-like_sf"/>
</dbReference>
<dbReference type="NCBIfam" id="TIGR00251">
    <property type="entry name" value="DUF167 family protein"/>
    <property type="match status" value="1"/>
</dbReference>
<dbReference type="PANTHER" id="PTHR13420">
    <property type="entry name" value="UPF0235 PROTEIN C15ORF40"/>
    <property type="match status" value="1"/>
</dbReference>
<dbReference type="PANTHER" id="PTHR13420:SF7">
    <property type="entry name" value="UPF0235 PROTEIN C15ORF40"/>
    <property type="match status" value="1"/>
</dbReference>
<dbReference type="Pfam" id="PF02594">
    <property type="entry name" value="DUF167"/>
    <property type="match status" value="1"/>
</dbReference>
<dbReference type="SMART" id="SM01152">
    <property type="entry name" value="DUF167"/>
    <property type="match status" value="1"/>
</dbReference>
<dbReference type="SUPFAM" id="SSF69786">
    <property type="entry name" value="YggU-like"/>
    <property type="match status" value="1"/>
</dbReference>
<evidence type="ECO:0000255" key="1">
    <source>
        <dbReference type="HAMAP-Rule" id="MF_00634"/>
    </source>
</evidence>
<reference key="1">
    <citation type="submission" date="2005-10" db="EMBL/GenBank/DDBJ databases">
        <title>Complete sequence of Pelobacter carbinolicus DSM 2380.</title>
        <authorList>
            <person name="Copeland A."/>
            <person name="Lucas S."/>
            <person name="Lapidus A."/>
            <person name="Barry K."/>
            <person name="Detter J.C."/>
            <person name="Glavina T."/>
            <person name="Hammon N."/>
            <person name="Israni S."/>
            <person name="Pitluck S."/>
            <person name="Chertkov O."/>
            <person name="Schmutz J."/>
            <person name="Larimer F."/>
            <person name="Land M."/>
            <person name="Kyrpides N."/>
            <person name="Ivanova N."/>
            <person name="Richardson P."/>
        </authorList>
    </citation>
    <scope>NUCLEOTIDE SEQUENCE [LARGE SCALE GENOMIC DNA]</scope>
    <source>
        <strain>DSM 2380 / NBRC 103641 / GraBd1</strain>
    </source>
</reference>
<gene>
    <name type="ordered locus">Pcar_0617</name>
</gene>
<accession>Q3A6Y1</accession>
<organism>
    <name type="scientific">Syntrophotalea carbinolica (strain DSM 2380 / NBRC 103641 / GraBd1)</name>
    <name type="common">Pelobacter carbinolicus</name>
    <dbReference type="NCBI Taxonomy" id="338963"/>
    <lineage>
        <taxon>Bacteria</taxon>
        <taxon>Pseudomonadati</taxon>
        <taxon>Thermodesulfobacteriota</taxon>
        <taxon>Desulfuromonadia</taxon>
        <taxon>Desulfuromonadales</taxon>
        <taxon>Syntrophotaleaceae</taxon>
        <taxon>Syntrophotalea</taxon>
    </lineage>
</organism>
<feature type="chain" id="PRO_1000212353" description="UPF0235 protein Pcar_0617">
    <location>
        <begin position="1"/>
        <end position="95"/>
    </location>
</feature>
<name>Y617_SYNC1</name>
<protein>
    <recommendedName>
        <fullName evidence="1">UPF0235 protein Pcar_0617</fullName>
    </recommendedName>
</protein>
<sequence length="95" mass="10345">MAECLSQTDKGVVLSVHVQPRASRNELAGLQGESLKIRLTSPPVEGAANKLCREFLAKLLGVAKSRVTLVSGDKSRHKRLLIEGVTLDEVRNKLL</sequence>